<protein>
    <recommendedName>
        <fullName>Putative L,D-transpeptidase YkuD</fullName>
        <ecNumber>2.-.-.-</ecNumber>
    </recommendedName>
    <alternativeName>
        <fullName>Spore protein YkuD homolog</fullName>
    </alternativeName>
</protein>
<reference key="1">
    <citation type="journal article" date="2004" name="J. Mol. Microbiol. Biotechnol.">
        <title>The complete genome sequence of Bacillus licheniformis DSM13, an organism with great industrial potential.</title>
        <authorList>
            <person name="Veith B."/>
            <person name="Herzberg C."/>
            <person name="Steckel S."/>
            <person name="Feesche J."/>
            <person name="Maurer K.H."/>
            <person name="Ehrenreich P."/>
            <person name="Baeumer S."/>
            <person name="Henne A."/>
            <person name="Liesegang H."/>
            <person name="Merkl R."/>
            <person name="Ehrenreich A."/>
            <person name="Gottschalk G."/>
        </authorList>
    </citation>
    <scope>NUCLEOTIDE SEQUENCE [LARGE SCALE GENOMIC DNA]</scope>
    <source>
        <strain>ATCC 14580 / DSM 13 / JCM 2505 / CCUG 7422 / NBRC 12200 / NCIMB 9375 / NCTC 10341 / NRRL NRS-1264 / Gibson 46</strain>
    </source>
</reference>
<reference key="2">
    <citation type="journal article" date="2004" name="Genome Biol.">
        <title>Complete genome sequence of the industrial bacterium Bacillus licheniformis and comparisons with closely related Bacillus species.</title>
        <authorList>
            <person name="Rey M.W."/>
            <person name="Ramaiya P."/>
            <person name="Nelson B.A."/>
            <person name="Brody-Karpin S.D."/>
            <person name="Zaretsky E.J."/>
            <person name="Tang M."/>
            <person name="Lopez de Leon A."/>
            <person name="Xiang H."/>
            <person name="Gusti V."/>
            <person name="Clausen I.G."/>
            <person name="Olsen P.B."/>
            <person name="Rasmussen M.D."/>
            <person name="Andersen J.T."/>
            <person name="Joergensen P.L."/>
            <person name="Larsen T.S."/>
            <person name="Sorokin A."/>
            <person name="Bolotin A."/>
            <person name="Lapidus A."/>
            <person name="Galleron N."/>
            <person name="Ehrlich S.D."/>
            <person name="Berka R.M."/>
        </authorList>
    </citation>
    <scope>NUCLEOTIDE SEQUENCE [LARGE SCALE GENOMIC DNA]</scope>
    <source>
        <strain>ATCC 14580 / DSM 13 / JCM 2505 / CCUG 7422 / NBRC 12200 / NCIMB 9375 / NCTC 10341 / NRRL NRS-1264 / Gibson 46</strain>
    </source>
</reference>
<gene>
    <name type="ordered locus">BLi01617</name>
    <name type="ordered locus">BL03652</name>
</gene>
<feature type="chain" id="PRO_0000227662" description="Putative L,D-transpeptidase YkuD">
    <location>
        <begin position="1"/>
        <end position="165"/>
    </location>
</feature>
<feature type="domain" description="LysM" evidence="2">
    <location>
        <begin position="2"/>
        <end position="46"/>
    </location>
</feature>
<feature type="domain" description="L,D-TPase catalytic" evidence="3">
    <location>
        <begin position="57"/>
        <end position="164"/>
    </location>
</feature>
<feature type="active site" description="Proton donor/acceptor" evidence="3">
    <location>
        <position position="124"/>
    </location>
</feature>
<feature type="active site" description="Nucleophile" evidence="3">
    <location>
        <position position="140"/>
    </location>
</feature>
<comment type="function">
    <text evidence="1">Probable enzyme that may play an important role in cell wall biology.</text>
</comment>
<comment type="pathway">
    <text>Cell wall biogenesis; peptidoglycan biosynthesis.</text>
</comment>
<comment type="subunit">
    <text evidence="1">Monomer.</text>
</comment>
<comment type="subcellular location">
    <subcellularLocation>
        <location evidence="1">Spore wall</location>
    </subcellularLocation>
    <text evidence="1">Probably localized either on the surface of the outer spore membrane and/or in the inner spore coat.</text>
</comment>
<comment type="domain">
    <text>LysM domains are thought to be involved in peptidoglycan binding.</text>
</comment>
<comment type="similarity">
    <text evidence="4">Belongs to the YkuD family.</text>
</comment>
<organism>
    <name type="scientific">Bacillus licheniformis (strain ATCC 14580 / DSM 13 / JCM 2505 / CCUG 7422 / NBRC 12200 / NCIMB 9375 / NCTC 10341 / NRRL NRS-1264 / Gibson 46)</name>
    <dbReference type="NCBI Taxonomy" id="279010"/>
    <lineage>
        <taxon>Bacteria</taxon>
        <taxon>Bacillati</taxon>
        <taxon>Bacillota</taxon>
        <taxon>Bacilli</taxon>
        <taxon>Bacillales</taxon>
        <taxon>Bacillaceae</taxon>
        <taxon>Bacillus</taxon>
    </lineage>
</organism>
<keyword id="KW-0133">Cell shape</keyword>
<keyword id="KW-0961">Cell wall biogenesis/degradation</keyword>
<keyword id="KW-0328">Glycosyltransferase</keyword>
<keyword id="KW-0378">Hydrolase</keyword>
<keyword id="KW-0573">Peptidoglycan synthesis</keyword>
<keyword id="KW-1185">Reference proteome</keyword>
<keyword id="KW-0749">Sporulation</keyword>
<keyword id="KW-0808">Transferase</keyword>
<evidence type="ECO:0000250" key="1"/>
<evidence type="ECO:0000255" key="2">
    <source>
        <dbReference type="PROSITE-ProRule" id="PRU01118"/>
    </source>
</evidence>
<evidence type="ECO:0000255" key="3">
    <source>
        <dbReference type="PROSITE-ProRule" id="PRU01373"/>
    </source>
</evidence>
<evidence type="ECO:0000305" key="4"/>
<dbReference type="EC" id="2.-.-.-"/>
<dbReference type="EMBL" id="AE017333">
    <property type="protein sequence ID" value="AAU40515.1"/>
    <property type="molecule type" value="Genomic_DNA"/>
</dbReference>
<dbReference type="EMBL" id="CP000002">
    <property type="protein sequence ID" value="AAU23158.1"/>
    <property type="molecule type" value="Genomic_DNA"/>
</dbReference>
<dbReference type="SMR" id="Q65K99"/>
<dbReference type="STRING" id="279010.BL03652"/>
<dbReference type="MEROPS" id="C82.003"/>
<dbReference type="KEGG" id="bld:BLi01617"/>
<dbReference type="KEGG" id="bli:BL03652"/>
<dbReference type="eggNOG" id="COG1376">
    <property type="taxonomic scope" value="Bacteria"/>
</dbReference>
<dbReference type="HOGENOM" id="CLU_042399_6_1_9"/>
<dbReference type="UniPathway" id="UPA00219"/>
<dbReference type="Proteomes" id="UP000000606">
    <property type="component" value="Chromosome"/>
</dbReference>
<dbReference type="GO" id="GO:0005576">
    <property type="term" value="C:extracellular region"/>
    <property type="evidence" value="ECO:0007669"/>
    <property type="project" value="TreeGrafter"/>
</dbReference>
<dbReference type="GO" id="GO:0031160">
    <property type="term" value="C:spore wall"/>
    <property type="evidence" value="ECO:0007669"/>
    <property type="project" value="UniProtKB-SubCell"/>
</dbReference>
<dbReference type="GO" id="GO:0016757">
    <property type="term" value="F:glycosyltransferase activity"/>
    <property type="evidence" value="ECO:0007669"/>
    <property type="project" value="UniProtKB-KW"/>
</dbReference>
<dbReference type="GO" id="GO:0071972">
    <property type="term" value="F:peptidoglycan L,D-transpeptidase activity"/>
    <property type="evidence" value="ECO:0007669"/>
    <property type="project" value="TreeGrafter"/>
</dbReference>
<dbReference type="GO" id="GO:0071555">
    <property type="term" value="P:cell wall organization"/>
    <property type="evidence" value="ECO:0007669"/>
    <property type="project" value="UniProtKB-KW"/>
</dbReference>
<dbReference type="GO" id="GO:0018104">
    <property type="term" value="P:peptidoglycan-protein cross-linking"/>
    <property type="evidence" value="ECO:0007669"/>
    <property type="project" value="TreeGrafter"/>
</dbReference>
<dbReference type="GO" id="GO:0008360">
    <property type="term" value="P:regulation of cell shape"/>
    <property type="evidence" value="ECO:0007669"/>
    <property type="project" value="UniProtKB-KW"/>
</dbReference>
<dbReference type="GO" id="GO:0030435">
    <property type="term" value="P:sporulation resulting in formation of a cellular spore"/>
    <property type="evidence" value="ECO:0007669"/>
    <property type="project" value="UniProtKB-KW"/>
</dbReference>
<dbReference type="CDD" id="cd00118">
    <property type="entry name" value="LysM"/>
    <property type="match status" value="1"/>
</dbReference>
<dbReference type="CDD" id="cd16913">
    <property type="entry name" value="YkuD_like"/>
    <property type="match status" value="1"/>
</dbReference>
<dbReference type="Gene3D" id="2.40.440.10">
    <property type="entry name" value="L,D-transpeptidase catalytic domain-like"/>
    <property type="match status" value="1"/>
</dbReference>
<dbReference type="Gene3D" id="3.10.350.10">
    <property type="entry name" value="LysM domain"/>
    <property type="match status" value="1"/>
</dbReference>
<dbReference type="InterPro" id="IPR050979">
    <property type="entry name" value="LD-transpeptidase"/>
</dbReference>
<dbReference type="InterPro" id="IPR005490">
    <property type="entry name" value="LD_TPept_cat_dom"/>
</dbReference>
<dbReference type="InterPro" id="IPR018392">
    <property type="entry name" value="LysM_dom"/>
</dbReference>
<dbReference type="InterPro" id="IPR036779">
    <property type="entry name" value="LysM_dom_sf"/>
</dbReference>
<dbReference type="InterPro" id="IPR038063">
    <property type="entry name" value="Transpep_catalytic_dom"/>
</dbReference>
<dbReference type="PANTHER" id="PTHR30582">
    <property type="entry name" value="L,D-TRANSPEPTIDASE"/>
    <property type="match status" value="1"/>
</dbReference>
<dbReference type="PANTHER" id="PTHR30582:SF24">
    <property type="entry name" value="L,D-TRANSPEPTIDASE ERFK_SRFK-RELATED"/>
    <property type="match status" value="1"/>
</dbReference>
<dbReference type="Pfam" id="PF01476">
    <property type="entry name" value="LysM"/>
    <property type="match status" value="1"/>
</dbReference>
<dbReference type="Pfam" id="PF03734">
    <property type="entry name" value="YkuD"/>
    <property type="match status" value="1"/>
</dbReference>
<dbReference type="SMART" id="SM00257">
    <property type="entry name" value="LysM"/>
    <property type="match status" value="1"/>
</dbReference>
<dbReference type="SUPFAM" id="SSF141523">
    <property type="entry name" value="L,D-transpeptidase catalytic domain-like"/>
    <property type="match status" value="1"/>
</dbReference>
<dbReference type="SUPFAM" id="SSF54106">
    <property type="entry name" value="LysM domain"/>
    <property type="match status" value="1"/>
</dbReference>
<dbReference type="PROSITE" id="PS52029">
    <property type="entry name" value="LD_TPASE"/>
    <property type="match status" value="1"/>
</dbReference>
<dbReference type="PROSITE" id="PS51782">
    <property type="entry name" value="LYSM"/>
    <property type="match status" value="1"/>
</dbReference>
<name>YKUD_BACLD</name>
<proteinExistence type="inferred from homology"/>
<sequence length="165" mass="18018">MLMYQVKPGETLESIAADFRTTRQALLQANPGLNGGQVSAGQSIIIPGIRNPDTIPYRIAVSLNGRTLRLYERDRLVKTYPIAVGKILTQTPRGEFVIVNRQPNPGGPFGAYWLSLSKQHYGIHGTNNPSSIGKAVSRGCIRMHNRDVLELASIVPNGTRVSITP</sequence>
<accession>Q65K99</accession>
<accession>Q62VQ0</accession>